<name>HYPA_THEKO</name>
<organism>
    <name type="scientific">Thermococcus kodakarensis (strain ATCC BAA-918 / JCM 12380 / KOD1)</name>
    <name type="common">Pyrococcus kodakaraensis (strain KOD1)</name>
    <dbReference type="NCBI Taxonomy" id="69014"/>
    <lineage>
        <taxon>Archaea</taxon>
        <taxon>Methanobacteriati</taxon>
        <taxon>Methanobacteriota</taxon>
        <taxon>Thermococci</taxon>
        <taxon>Thermococcales</taxon>
        <taxon>Thermococcaceae</taxon>
        <taxon>Thermococcus</taxon>
    </lineage>
</organism>
<keyword id="KW-0002">3D-structure</keyword>
<keyword id="KW-0479">Metal-binding</keyword>
<keyword id="KW-0533">Nickel</keyword>
<keyword id="KW-1185">Reference proteome</keyword>
<keyword id="KW-0862">Zinc</keyword>
<comment type="function">
    <text evidence="1">Involved in the maturation of [NiFe] hydrogenases. Required for nickel insertion into the metal center of the hydrogenase.</text>
</comment>
<comment type="subunit">
    <text evidence="2 3">Monomer and homodimer. Could also form hexamers (PubMed:19769985). Forms a complex with HypB (PubMed:26056269).</text>
</comment>
<comment type="similarity">
    <text evidence="1">Belongs to the HypA/HybF family.</text>
</comment>
<accession>Q5JIH3</accession>
<reference key="1">
    <citation type="journal article" date="2005" name="Genome Res.">
        <title>Complete genome sequence of the hyperthermophilic archaeon Thermococcus kodakaraensis KOD1 and comparison with Pyrococcus genomes.</title>
        <authorList>
            <person name="Fukui T."/>
            <person name="Atomi H."/>
            <person name="Kanai T."/>
            <person name="Matsumi R."/>
            <person name="Fujiwara S."/>
            <person name="Imanaka T."/>
        </authorList>
    </citation>
    <scope>NUCLEOTIDE SEQUENCE [LARGE SCALE GENOMIC DNA]</scope>
    <source>
        <strain>ATCC BAA-918 / JCM 12380 / KOD1</strain>
    </source>
</reference>
<reference evidence="6 7" key="2">
    <citation type="journal article" date="2009" name="J. Mol. Biol.">
        <title>Crystal structure of HypA, a nickel-binding metallochaperone for [NiFe] hydrogenase maturation.</title>
        <authorList>
            <person name="Watanabe S."/>
            <person name="Arai T."/>
            <person name="Matsumi R."/>
            <person name="Atomi H."/>
            <person name="Imanaka T."/>
            <person name="Miki K."/>
        </authorList>
    </citation>
    <scope>X-RAY CRYSTALLOGRAPHY (2.30 ANGSTROMS) IN COMPLEX WITH ZINC</scope>
    <scope>SUBUNIT</scope>
    <source>
        <strain>ATCC BAA-918 / JCM 12380 / KOD1</strain>
    </source>
</reference>
<reference evidence="8 9 10" key="3">
    <citation type="journal article" date="2015" name="Proc. Natl. Acad. Sci. U.S.A.">
        <title>Structural basis of a Ni acquisition cycle for [NiFe] hydrogenase by Ni-metallochaperone HypA and its enhancer.</title>
        <authorList>
            <person name="Watanabe S."/>
            <person name="Kawashima T."/>
            <person name="Nishitani Y."/>
            <person name="Kanai T."/>
            <person name="Wada T."/>
            <person name="Inaba K."/>
            <person name="Atomi H."/>
            <person name="Imanaka T."/>
            <person name="Miki K."/>
        </authorList>
    </citation>
    <scope>X-RAY CRYSTALLOGRAPHY (1.63 ANGSTROMS) IN COMPLEXES WITH ZINC AND NICKEL</scope>
    <scope>INTERACTION WITH HYPB</scope>
</reference>
<feature type="chain" id="PRO_0000129085" description="Hydrogenase maturation factor HypA">
    <location>
        <begin position="1"/>
        <end position="139"/>
    </location>
</feature>
<feature type="binding site" evidence="3 8 9">
    <location>
        <position position="1"/>
    </location>
    <ligand>
        <name>Ni(2+)</name>
        <dbReference type="ChEBI" id="CHEBI:49786"/>
    </ligand>
</feature>
<feature type="binding site" evidence="3 8 9">
    <location>
        <position position="2"/>
    </location>
    <ligand>
        <name>Ni(2+)</name>
        <dbReference type="ChEBI" id="CHEBI:49786"/>
    </ligand>
</feature>
<feature type="binding site" evidence="1 2 3 6 7 8 9 10">
    <location>
        <position position="73"/>
    </location>
    <ligand>
        <name>Zn(2+)</name>
        <dbReference type="ChEBI" id="CHEBI:29105"/>
    </ligand>
</feature>
<feature type="binding site" evidence="1 2 3 6 7 8 9 10">
    <location>
        <position position="76"/>
    </location>
    <ligand>
        <name>Zn(2+)</name>
        <dbReference type="ChEBI" id="CHEBI:29105"/>
    </ligand>
</feature>
<feature type="binding site" evidence="3 8 9">
    <location>
        <position position="98"/>
    </location>
    <ligand>
        <name>Ni(2+)</name>
        <dbReference type="ChEBI" id="CHEBI:49786"/>
    </ligand>
</feature>
<feature type="binding site" evidence="1 2 3 6 7 8 9 10">
    <location>
        <position position="110"/>
    </location>
    <ligand>
        <name>Zn(2+)</name>
        <dbReference type="ChEBI" id="CHEBI:29105"/>
    </ligand>
</feature>
<feature type="binding site" evidence="1 2 3 6 7 8 9 10">
    <location>
        <position position="113"/>
    </location>
    <ligand>
        <name>Zn(2+)</name>
        <dbReference type="ChEBI" id="CHEBI:29105"/>
    </ligand>
</feature>
<feature type="helix" evidence="11">
    <location>
        <begin position="3"/>
        <end position="20"/>
    </location>
</feature>
<feature type="strand" evidence="11">
    <location>
        <begin position="24"/>
        <end position="34"/>
    </location>
</feature>
<feature type="helix" evidence="11">
    <location>
        <begin position="35"/>
        <end position="37"/>
    </location>
</feature>
<feature type="helix" evidence="11">
    <location>
        <begin position="41"/>
        <end position="52"/>
    </location>
</feature>
<feature type="turn" evidence="11">
    <location>
        <begin position="56"/>
        <end position="59"/>
    </location>
</feature>
<feature type="strand" evidence="11">
    <location>
        <begin position="61"/>
        <end position="67"/>
    </location>
</feature>
<feature type="strand" evidence="11">
    <location>
        <begin position="70"/>
        <end position="73"/>
    </location>
</feature>
<feature type="turn" evidence="11">
    <location>
        <begin position="74"/>
        <end position="76"/>
    </location>
</feature>
<feature type="strand" evidence="11">
    <location>
        <begin position="79"/>
        <end position="81"/>
    </location>
</feature>
<feature type="helix" evidence="11">
    <location>
        <begin position="82"/>
        <end position="84"/>
    </location>
</feature>
<feature type="helix" evidence="11">
    <location>
        <begin position="86"/>
        <end position="88"/>
    </location>
</feature>
<feature type="helix" evidence="11">
    <location>
        <begin position="91"/>
        <end position="99"/>
    </location>
</feature>
<feature type="helix" evidence="11">
    <location>
        <begin position="101"/>
        <end position="103"/>
    </location>
</feature>
<feature type="helix" evidence="11">
    <location>
        <begin position="104"/>
        <end position="107"/>
    </location>
</feature>
<feature type="turn" evidence="11">
    <location>
        <begin position="111"/>
        <end position="113"/>
    </location>
</feature>
<feature type="strand" evidence="11">
    <location>
        <begin position="118"/>
        <end position="122"/>
    </location>
</feature>
<feature type="strand" evidence="11">
    <location>
        <begin position="125"/>
        <end position="134"/>
    </location>
</feature>
<gene>
    <name evidence="4" type="primary">hypA</name>
    <name type="ordered locus">TK2008</name>
</gene>
<dbReference type="EMBL" id="AP006878">
    <property type="protein sequence ID" value="BAD86197.1"/>
    <property type="molecule type" value="Genomic_DNA"/>
</dbReference>
<dbReference type="RefSeq" id="WP_011250958.1">
    <property type="nucleotide sequence ID" value="NC_006624.1"/>
</dbReference>
<dbReference type="PDB" id="3A43">
    <property type="method" value="X-ray"/>
    <property type="resolution" value="2.30 A"/>
    <property type="chains" value="A/B=1-139"/>
</dbReference>
<dbReference type="PDB" id="3A44">
    <property type="method" value="X-ray"/>
    <property type="resolution" value="3.31 A"/>
    <property type="chains" value="A/B/C/D=1-139"/>
</dbReference>
<dbReference type="PDB" id="5AUN">
    <property type="method" value="X-ray"/>
    <property type="resolution" value="1.63 A"/>
    <property type="chains" value="A=1-139"/>
</dbReference>
<dbReference type="PDB" id="5AUO">
    <property type="method" value="X-ray"/>
    <property type="resolution" value="1.80 A"/>
    <property type="chains" value="A=1-139"/>
</dbReference>
<dbReference type="PDB" id="5AUP">
    <property type="method" value="X-ray"/>
    <property type="resolution" value="3.10 A"/>
    <property type="chains" value="A/H=1-139"/>
</dbReference>
<dbReference type="PDB" id="5YXY">
    <property type="method" value="X-ray"/>
    <property type="resolution" value="3.30 A"/>
    <property type="chains" value="D/E/F=1-139"/>
</dbReference>
<dbReference type="PDB" id="5YY0">
    <property type="method" value="X-ray"/>
    <property type="resolution" value="3.24 A"/>
    <property type="chains" value="B=1-139"/>
</dbReference>
<dbReference type="PDBsum" id="3A43"/>
<dbReference type="PDBsum" id="3A44"/>
<dbReference type="PDBsum" id="5AUN"/>
<dbReference type="PDBsum" id="5AUO"/>
<dbReference type="PDBsum" id="5AUP"/>
<dbReference type="PDBsum" id="5YXY"/>
<dbReference type="PDBsum" id="5YY0"/>
<dbReference type="SMR" id="Q5JIH3"/>
<dbReference type="STRING" id="69014.TK2008"/>
<dbReference type="EnsemblBacteria" id="BAD86197">
    <property type="protein sequence ID" value="BAD86197"/>
    <property type="gene ID" value="TK2008"/>
</dbReference>
<dbReference type="GeneID" id="78448543"/>
<dbReference type="KEGG" id="tko:TK2008"/>
<dbReference type="PATRIC" id="fig|69014.16.peg.1961"/>
<dbReference type="eggNOG" id="arCOG04426">
    <property type="taxonomic scope" value="Archaea"/>
</dbReference>
<dbReference type="HOGENOM" id="CLU_126929_2_0_2"/>
<dbReference type="InParanoid" id="Q5JIH3"/>
<dbReference type="OrthoDB" id="36835at2157"/>
<dbReference type="PhylomeDB" id="Q5JIH3"/>
<dbReference type="EvolutionaryTrace" id="Q5JIH3"/>
<dbReference type="Proteomes" id="UP000000536">
    <property type="component" value="Chromosome"/>
</dbReference>
<dbReference type="GO" id="GO:0016151">
    <property type="term" value="F:nickel cation binding"/>
    <property type="evidence" value="ECO:0000318"/>
    <property type="project" value="GO_Central"/>
</dbReference>
<dbReference type="GO" id="GO:0008270">
    <property type="term" value="F:zinc ion binding"/>
    <property type="evidence" value="ECO:0000318"/>
    <property type="project" value="GO_Central"/>
</dbReference>
<dbReference type="GO" id="GO:0051604">
    <property type="term" value="P:protein maturation"/>
    <property type="evidence" value="ECO:0000318"/>
    <property type="project" value="GO_Central"/>
</dbReference>
<dbReference type="GO" id="GO:0036211">
    <property type="term" value="P:protein modification process"/>
    <property type="evidence" value="ECO:0007669"/>
    <property type="project" value="UniProtKB-UniRule"/>
</dbReference>
<dbReference type="FunFam" id="3.30.2320.80:FF:000004">
    <property type="entry name" value="Hydrogenase maturation factor HypA"/>
    <property type="match status" value="1"/>
</dbReference>
<dbReference type="Gene3D" id="3.30.2320.80">
    <property type="match status" value="1"/>
</dbReference>
<dbReference type="HAMAP" id="MF_00213">
    <property type="entry name" value="HypA_HybF"/>
    <property type="match status" value="1"/>
</dbReference>
<dbReference type="InterPro" id="IPR020538">
    <property type="entry name" value="Hydgase_Ni_incorp_HypA/HybF_CS"/>
</dbReference>
<dbReference type="InterPro" id="IPR000688">
    <property type="entry name" value="HypA/HybF"/>
</dbReference>
<dbReference type="NCBIfam" id="NF003008">
    <property type="entry name" value="PRK03824.1"/>
    <property type="match status" value="1"/>
</dbReference>
<dbReference type="PANTHER" id="PTHR34535">
    <property type="entry name" value="HYDROGENASE MATURATION FACTOR HYPA"/>
    <property type="match status" value="1"/>
</dbReference>
<dbReference type="PANTHER" id="PTHR34535:SF3">
    <property type="entry name" value="HYDROGENASE MATURATION FACTOR HYPA"/>
    <property type="match status" value="1"/>
</dbReference>
<dbReference type="Pfam" id="PF01155">
    <property type="entry name" value="HypA"/>
    <property type="match status" value="1"/>
</dbReference>
<dbReference type="PIRSF" id="PIRSF004761">
    <property type="entry name" value="Hydrgn_mat_HypA"/>
    <property type="match status" value="1"/>
</dbReference>
<dbReference type="PROSITE" id="PS01249">
    <property type="entry name" value="HYPA"/>
    <property type="match status" value="1"/>
</dbReference>
<proteinExistence type="evidence at protein level"/>
<sequence length="139" mass="15689">MHEWALADAIVRTVLDYAQREGASRVKAVRVVLGELQDVAEDIVKFAMEQLFAGTIAEGAEIEFVEEEAVFKCRNCNYEWKLKEVKDKFDERIKEDIHFIPEVVHAFLACPKCGSHDFEVVKGRGVYVAGIKIEKEGGS</sequence>
<protein>
    <recommendedName>
        <fullName evidence="5">Hydrogenase maturation factor HypA</fullName>
    </recommendedName>
</protein>
<evidence type="ECO:0000255" key="1">
    <source>
        <dbReference type="HAMAP-Rule" id="MF_00213"/>
    </source>
</evidence>
<evidence type="ECO:0000269" key="2">
    <source>
    </source>
</evidence>
<evidence type="ECO:0000269" key="3">
    <source>
    </source>
</evidence>
<evidence type="ECO:0000303" key="4">
    <source>
    </source>
</evidence>
<evidence type="ECO:0000305" key="5"/>
<evidence type="ECO:0007744" key="6">
    <source>
        <dbReference type="PDB" id="3A43"/>
    </source>
</evidence>
<evidence type="ECO:0007744" key="7">
    <source>
        <dbReference type="PDB" id="3A44"/>
    </source>
</evidence>
<evidence type="ECO:0007744" key="8">
    <source>
        <dbReference type="PDB" id="5AUN"/>
    </source>
</evidence>
<evidence type="ECO:0007744" key="9">
    <source>
        <dbReference type="PDB" id="5AUO"/>
    </source>
</evidence>
<evidence type="ECO:0007744" key="10">
    <source>
        <dbReference type="PDB" id="5AUP"/>
    </source>
</evidence>
<evidence type="ECO:0007829" key="11">
    <source>
        <dbReference type="PDB" id="5AUN"/>
    </source>
</evidence>